<organism>
    <name type="scientific">Pseudomonas aeruginosa (strain LESB58)</name>
    <dbReference type="NCBI Taxonomy" id="557722"/>
    <lineage>
        <taxon>Bacteria</taxon>
        <taxon>Pseudomonadati</taxon>
        <taxon>Pseudomonadota</taxon>
        <taxon>Gammaproteobacteria</taxon>
        <taxon>Pseudomonadales</taxon>
        <taxon>Pseudomonadaceae</taxon>
        <taxon>Pseudomonas</taxon>
    </lineage>
</organism>
<proteinExistence type="inferred from homology"/>
<accession>B7V0H2</accession>
<protein>
    <recommendedName>
        <fullName evidence="1">Ribosomal RNA small subunit methyltransferase C</fullName>
        <ecNumber evidence="1">2.1.1.172</ecNumber>
    </recommendedName>
    <alternativeName>
        <fullName evidence="1">16S rRNA m2G1207 methyltransferase</fullName>
    </alternativeName>
    <alternativeName>
        <fullName evidence="1">rRNA (guanine-N(2)-)-methyltransferase RsmC</fullName>
    </alternativeName>
</protein>
<reference key="1">
    <citation type="journal article" date="2009" name="Genome Res.">
        <title>Newly introduced genomic prophage islands are critical determinants of in vivo competitiveness in the Liverpool epidemic strain of Pseudomonas aeruginosa.</title>
        <authorList>
            <person name="Winstanley C."/>
            <person name="Langille M.G.I."/>
            <person name="Fothergill J.L."/>
            <person name="Kukavica-Ibrulj I."/>
            <person name="Paradis-Bleau C."/>
            <person name="Sanschagrin F."/>
            <person name="Thomson N.R."/>
            <person name="Winsor G.L."/>
            <person name="Quail M.A."/>
            <person name="Lennard N."/>
            <person name="Bignell A."/>
            <person name="Clarke L."/>
            <person name="Seeger K."/>
            <person name="Saunders D."/>
            <person name="Harris D."/>
            <person name="Parkhill J."/>
            <person name="Hancock R.E.W."/>
            <person name="Brinkman F.S.L."/>
            <person name="Levesque R.C."/>
        </authorList>
    </citation>
    <scope>NUCLEOTIDE SEQUENCE [LARGE SCALE GENOMIC DNA]</scope>
    <source>
        <strain>LESB58</strain>
    </source>
</reference>
<keyword id="KW-0963">Cytoplasm</keyword>
<keyword id="KW-0489">Methyltransferase</keyword>
<keyword id="KW-0698">rRNA processing</keyword>
<keyword id="KW-0949">S-adenosyl-L-methionine</keyword>
<keyword id="KW-0808">Transferase</keyword>
<evidence type="ECO:0000255" key="1">
    <source>
        <dbReference type="HAMAP-Rule" id="MF_01862"/>
    </source>
</evidence>
<feature type="chain" id="PRO_0000369735" description="Ribosomal RNA small subunit methyltransferase C">
    <location>
        <begin position="1"/>
        <end position="332"/>
    </location>
</feature>
<sequence length="332" mass="35923">MDPRSEVLLRQRHLFATPLLLAGLPADDLLAELPQAQGWSWHAGEQAQLDARFPGRSRFDTRAPTGAWTSAVLFLPKSRELTDYLLASLAARLPGGELFLVGEKRGGIERASKQLAAYGKPRKLDSARHCQLWQVRIEQAPAEPDLHALAQRYSLPLADGELQVVSLPGVFSHGRLDRGSALLLGQLQALPGGHLLDFGCGAGVLGAALKRRYPASRLTLLDVDAFAVESSRLTLAANGLDGEVIAADGIDGAPRELAAIVSNPPFHQGVHTDYQASERLLQRAAEHLAPGGELRLVANSFLKYPPLIERHLGPCRTLAEGDGFRIYSARRS</sequence>
<dbReference type="EC" id="2.1.1.172" evidence="1"/>
<dbReference type="EMBL" id="FM209186">
    <property type="protein sequence ID" value="CAW29766.1"/>
    <property type="molecule type" value="Genomic_DNA"/>
</dbReference>
<dbReference type="RefSeq" id="WP_003135073.1">
    <property type="nucleotide sequence ID" value="NC_011770.1"/>
</dbReference>
<dbReference type="SMR" id="B7V0H2"/>
<dbReference type="KEGG" id="pag:PLES_50121"/>
<dbReference type="HOGENOM" id="CLU_049581_0_0_6"/>
<dbReference type="GO" id="GO:0005737">
    <property type="term" value="C:cytoplasm"/>
    <property type="evidence" value="ECO:0007669"/>
    <property type="project" value="UniProtKB-SubCell"/>
</dbReference>
<dbReference type="GO" id="GO:0052914">
    <property type="term" value="F:16S rRNA (guanine(1207)-N(2))-methyltransferase activity"/>
    <property type="evidence" value="ECO:0007669"/>
    <property type="project" value="UniProtKB-EC"/>
</dbReference>
<dbReference type="GO" id="GO:0003676">
    <property type="term" value="F:nucleic acid binding"/>
    <property type="evidence" value="ECO:0007669"/>
    <property type="project" value="InterPro"/>
</dbReference>
<dbReference type="CDD" id="cd02440">
    <property type="entry name" value="AdoMet_MTases"/>
    <property type="match status" value="1"/>
</dbReference>
<dbReference type="Gene3D" id="3.40.50.150">
    <property type="entry name" value="Vaccinia Virus protein VP39"/>
    <property type="match status" value="2"/>
</dbReference>
<dbReference type="HAMAP" id="MF_01862">
    <property type="entry name" value="16SrRNA_methyltr_C"/>
    <property type="match status" value="1"/>
</dbReference>
<dbReference type="InterPro" id="IPR002052">
    <property type="entry name" value="DNA_methylase_N6_adenine_CS"/>
</dbReference>
<dbReference type="InterPro" id="IPR013675">
    <property type="entry name" value="Mtase_sm_N"/>
</dbReference>
<dbReference type="InterPro" id="IPR023543">
    <property type="entry name" value="rRNA_ssu_MeTfrase_C"/>
</dbReference>
<dbReference type="InterPro" id="IPR046977">
    <property type="entry name" value="RsmC/RlmG"/>
</dbReference>
<dbReference type="InterPro" id="IPR029063">
    <property type="entry name" value="SAM-dependent_MTases_sf"/>
</dbReference>
<dbReference type="InterPro" id="IPR007848">
    <property type="entry name" value="Small_mtfrase_dom"/>
</dbReference>
<dbReference type="PANTHER" id="PTHR47816">
    <property type="entry name" value="RIBOSOMAL RNA SMALL SUBUNIT METHYLTRANSFERASE C"/>
    <property type="match status" value="1"/>
</dbReference>
<dbReference type="PANTHER" id="PTHR47816:SF4">
    <property type="entry name" value="RIBOSOMAL RNA SMALL SUBUNIT METHYLTRANSFERASE C"/>
    <property type="match status" value="1"/>
</dbReference>
<dbReference type="Pfam" id="PF05175">
    <property type="entry name" value="MTS"/>
    <property type="match status" value="1"/>
</dbReference>
<dbReference type="Pfam" id="PF08468">
    <property type="entry name" value="MTS_N"/>
    <property type="match status" value="1"/>
</dbReference>
<dbReference type="SUPFAM" id="SSF53335">
    <property type="entry name" value="S-adenosyl-L-methionine-dependent methyltransferases"/>
    <property type="match status" value="1"/>
</dbReference>
<gene>
    <name evidence="1" type="primary">rsmC</name>
    <name type="ordered locus">PLES_50121</name>
</gene>
<comment type="function">
    <text evidence="1">Specifically methylates the guanine in position 1207 of 16S rRNA in the 30S particle.</text>
</comment>
<comment type="catalytic activity">
    <reaction evidence="1">
        <text>guanosine(1207) in 16S rRNA + S-adenosyl-L-methionine = N(2)-methylguanosine(1207) in 16S rRNA + S-adenosyl-L-homocysteine + H(+)</text>
        <dbReference type="Rhea" id="RHEA:42736"/>
        <dbReference type="Rhea" id="RHEA-COMP:10213"/>
        <dbReference type="Rhea" id="RHEA-COMP:10214"/>
        <dbReference type="ChEBI" id="CHEBI:15378"/>
        <dbReference type="ChEBI" id="CHEBI:57856"/>
        <dbReference type="ChEBI" id="CHEBI:59789"/>
        <dbReference type="ChEBI" id="CHEBI:74269"/>
        <dbReference type="ChEBI" id="CHEBI:74481"/>
        <dbReference type="EC" id="2.1.1.172"/>
    </reaction>
</comment>
<comment type="subunit">
    <text evidence="1">Monomer.</text>
</comment>
<comment type="subcellular location">
    <subcellularLocation>
        <location evidence="1">Cytoplasm</location>
    </subcellularLocation>
</comment>
<comment type="similarity">
    <text evidence="1">Belongs to the methyltransferase superfamily. RsmC family.</text>
</comment>
<name>RSMC_PSEA8</name>